<sequence length="298" mass="31075">MQLEKMITEGSNAASAEIDRVSTLEMCRIINDEDKTVPLAVERVLPDIAAAIDVIHAQVSGGGRLIYLGAGTSGRLGILDASECPPTYGVKPGLVVGLIAGGEYAIQHAVEGAEDSREGGVNDLKNIGLTAQDVVVGIAASGRTPYVIAGLEYARQLGCRTVGISCNPGSAVSSTAEFAITPVVGAEVVTGSSRMKAGTAQKLVLNMLSTGLMIKSGKVFGNLMVDVVATNEKLHVRQVNIVKNATGCNAEQAEAALIACERNCKTAIVMVLKNLDADEAKKCLDQHGGFIRKALEKE</sequence>
<comment type="function">
    <text evidence="1">Specifically catalyzes the cleavage of the D-lactyl ether substituent of MurNAc 6-phosphate, producing GlcNAc 6-phosphate and D-lactate. Together with AnmK, is also required for the utilization of anhydro-N-acetylmuramic acid (anhMurNAc) either imported from the medium or derived from its own cell wall murein, and thus plays a role in cell wall recycling.</text>
</comment>
<comment type="catalytic activity">
    <reaction evidence="1">
        <text>N-acetyl-D-muramate 6-phosphate + H2O = N-acetyl-D-glucosamine 6-phosphate + (R)-lactate</text>
        <dbReference type="Rhea" id="RHEA:26410"/>
        <dbReference type="ChEBI" id="CHEBI:15377"/>
        <dbReference type="ChEBI" id="CHEBI:16004"/>
        <dbReference type="ChEBI" id="CHEBI:57513"/>
        <dbReference type="ChEBI" id="CHEBI:58722"/>
        <dbReference type="EC" id="4.2.1.126"/>
    </reaction>
</comment>
<comment type="pathway">
    <text evidence="1">Amino-sugar metabolism; 1,6-anhydro-N-acetylmuramate degradation.</text>
</comment>
<comment type="pathway">
    <text evidence="1">Amino-sugar metabolism; N-acetylmuramate degradation.</text>
</comment>
<comment type="pathway">
    <text evidence="1">Cell wall biogenesis; peptidoglycan recycling.</text>
</comment>
<comment type="subunit">
    <text evidence="1">Homodimer.</text>
</comment>
<comment type="induction">
    <text evidence="1">Induced by MurNAc 6-phosphate that releases the repressor MurR from the DNA. Repressed by MurR in the absence of MurNAc 6-phosphate.</text>
</comment>
<comment type="miscellaneous">
    <text evidence="1">A lyase-type mechanism (elimination/hydration) is suggested for the cleavage of the lactyl ether bond of MurNAc 6-phosphate, with the formation of an alpha,beta-unsaturated aldehyde intermediate with (E)-stereochemistry, followed by the syn addition of water to give product.</text>
</comment>
<comment type="similarity">
    <text evidence="1">Belongs to the GCKR-like family. MurNAc-6-P etherase subfamily.</text>
</comment>
<proteinExistence type="inferred from homology"/>
<reference key="1">
    <citation type="journal article" date="2009" name="PLoS Genet.">
        <title>Organised genome dynamics in the Escherichia coli species results in highly diverse adaptive paths.</title>
        <authorList>
            <person name="Touchon M."/>
            <person name="Hoede C."/>
            <person name="Tenaillon O."/>
            <person name="Barbe V."/>
            <person name="Baeriswyl S."/>
            <person name="Bidet P."/>
            <person name="Bingen E."/>
            <person name="Bonacorsi S."/>
            <person name="Bouchier C."/>
            <person name="Bouvet O."/>
            <person name="Calteau A."/>
            <person name="Chiapello H."/>
            <person name="Clermont O."/>
            <person name="Cruveiller S."/>
            <person name="Danchin A."/>
            <person name="Diard M."/>
            <person name="Dossat C."/>
            <person name="Karoui M.E."/>
            <person name="Frapy E."/>
            <person name="Garry L."/>
            <person name="Ghigo J.M."/>
            <person name="Gilles A.M."/>
            <person name="Johnson J."/>
            <person name="Le Bouguenec C."/>
            <person name="Lescat M."/>
            <person name="Mangenot S."/>
            <person name="Martinez-Jehanne V."/>
            <person name="Matic I."/>
            <person name="Nassif X."/>
            <person name="Oztas S."/>
            <person name="Petit M.A."/>
            <person name="Pichon C."/>
            <person name="Rouy Z."/>
            <person name="Ruf C.S."/>
            <person name="Schneider D."/>
            <person name="Tourret J."/>
            <person name="Vacherie B."/>
            <person name="Vallenet D."/>
            <person name="Medigue C."/>
            <person name="Rocha E.P.C."/>
            <person name="Denamur E."/>
        </authorList>
    </citation>
    <scope>NUCLEOTIDE SEQUENCE [LARGE SCALE GENOMIC DNA]</scope>
    <source>
        <strain>ED1a</strain>
    </source>
</reference>
<dbReference type="EC" id="4.2.1.126" evidence="1"/>
<dbReference type="EMBL" id="CU928162">
    <property type="protein sequence ID" value="CAR09045.2"/>
    <property type="molecule type" value="Genomic_DNA"/>
</dbReference>
<dbReference type="RefSeq" id="WP_001175610.1">
    <property type="nucleotide sequence ID" value="NC_011745.1"/>
</dbReference>
<dbReference type="SMR" id="B7MY79"/>
<dbReference type="KEGG" id="ecq:ECED1_2870"/>
<dbReference type="HOGENOM" id="CLU_049049_1_1_6"/>
<dbReference type="UniPathway" id="UPA00342"/>
<dbReference type="UniPathway" id="UPA00343"/>
<dbReference type="UniPathway" id="UPA00544"/>
<dbReference type="Proteomes" id="UP000000748">
    <property type="component" value="Chromosome"/>
</dbReference>
<dbReference type="GO" id="GO:0097367">
    <property type="term" value="F:carbohydrate derivative binding"/>
    <property type="evidence" value="ECO:0007669"/>
    <property type="project" value="InterPro"/>
</dbReference>
<dbReference type="GO" id="GO:0016835">
    <property type="term" value="F:carbon-oxygen lyase activity"/>
    <property type="evidence" value="ECO:0007669"/>
    <property type="project" value="UniProtKB-UniRule"/>
</dbReference>
<dbReference type="GO" id="GO:0016803">
    <property type="term" value="F:ether hydrolase activity"/>
    <property type="evidence" value="ECO:0007669"/>
    <property type="project" value="TreeGrafter"/>
</dbReference>
<dbReference type="GO" id="GO:0097175">
    <property type="term" value="P:1,6-anhydro-N-acetyl-beta-muramic acid catabolic process"/>
    <property type="evidence" value="ECO:0007669"/>
    <property type="project" value="UniProtKB-UniRule"/>
</dbReference>
<dbReference type="GO" id="GO:0046348">
    <property type="term" value="P:amino sugar catabolic process"/>
    <property type="evidence" value="ECO:0007669"/>
    <property type="project" value="InterPro"/>
</dbReference>
<dbReference type="GO" id="GO:0097173">
    <property type="term" value="P:N-acetylmuramic acid catabolic process"/>
    <property type="evidence" value="ECO:0007669"/>
    <property type="project" value="UniProtKB-UniPathway"/>
</dbReference>
<dbReference type="GO" id="GO:0009254">
    <property type="term" value="P:peptidoglycan turnover"/>
    <property type="evidence" value="ECO:0007669"/>
    <property type="project" value="UniProtKB-UniRule"/>
</dbReference>
<dbReference type="CDD" id="cd05007">
    <property type="entry name" value="SIS_Etherase"/>
    <property type="match status" value="1"/>
</dbReference>
<dbReference type="FunFam" id="1.10.8.1080:FF:000001">
    <property type="entry name" value="N-acetylmuramic acid 6-phosphate etherase"/>
    <property type="match status" value="1"/>
</dbReference>
<dbReference type="FunFam" id="3.40.50.10490:FF:000014">
    <property type="entry name" value="N-acetylmuramic acid 6-phosphate etherase"/>
    <property type="match status" value="1"/>
</dbReference>
<dbReference type="Gene3D" id="1.10.8.1080">
    <property type="match status" value="1"/>
</dbReference>
<dbReference type="Gene3D" id="3.40.50.10490">
    <property type="entry name" value="Glucose-6-phosphate isomerase like protein, domain 1"/>
    <property type="match status" value="1"/>
</dbReference>
<dbReference type="HAMAP" id="MF_00068">
    <property type="entry name" value="MurQ"/>
    <property type="match status" value="1"/>
</dbReference>
<dbReference type="InterPro" id="IPR005488">
    <property type="entry name" value="Etherase_MurQ"/>
</dbReference>
<dbReference type="InterPro" id="IPR005486">
    <property type="entry name" value="Glucokinase_regulatory_CS"/>
</dbReference>
<dbReference type="InterPro" id="IPR040190">
    <property type="entry name" value="MURQ/GCKR"/>
</dbReference>
<dbReference type="InterPro" id="IPR001347">
    <property type="entry name" value="SIS_dom"/>
</dbReference>
<dbReference type="InterPro" id="IPR046348">
    <property type="entry name" value="SIS_dom_sf"/>
</dbReference>
<dbReference type="NCBIfam" id="TIGR00274">
    <property type="entry name" value="N-acetylmuramic acid 6-phosphate etherase"/>
    <property type="match status" value="1"/>
</dbReference>
<dbReference type="NCBIfam" id="NF003915">
    <property type="entry name" value="PRK05441.1"/>
    <property type="match status" value="1"/>
</dbReference>
<dbReference type="NCBIfam" id="NF009222">
    <property type="entry name" value="PRK12570.1"/>
    <property type="match status" value="1"/>
</dbReference>
<dbReference type="PANTHER" id="PTHR10088">
    <property type="entry name" value="GLUCOKINASE REGULATORY PROTEIN"/>
    <property type="match status" value="1"/>
</dbReference>
<dbReference type="PANTHER" id="PTHR10088:SF4">
    <property type="entry name" value="GLUCOKINASE REGULATORY PROTEIN"/>
    <property type="match status" value="1"/>
</dbReference>
<dbReference type="Pfam" id="PF22645">
    <property type="entry name" value="GKRP_SIS_N"/>
    <property type="match status" value="1"/>
</dbReference>
<dbReference type="SUPFAM" id="SSF53697">
    <property type="entry name" value="SIS domain"/>
    <property type="match status" value="1"/>
</dbReference>
<dbReference type="PROSITE" id="PS01272">
    <property type="entry name" value="GCKR"/>
    <property type="match status" value="1"/>
</dbReference>
<dbReference type="PROSITE" id="PS51464">
    <property type="entry name" value="SIS"/>
    <property type="match status" value="1"/>
</dbReference>
<accession>B7MY79</accession>
<evidence type="ECO:0000255" key="1">
    <source>
        <dbReference type="HAMAP-Rule" id="MF_00068"/>
    </source>
</evidence>
<gene>
    <name evidence="1" type="primary">murQ</name>
    <name type="ordered locus">ECED1_2870</name>
</gene>
<keyword id="KW-0119">Carbohydrate metabolism</keyword>
<keyword id="KW-0456">Lyase</keyword>
<protein>
    <recommendedName>
        <fullName evidence="1">N-acetylmuramic acid 6-phosphate etherase</fullName>
        <shortName evidence="1">MurNAc-6-P etherase</shortName>
        <ecNumber evidence="1">4.2.1.126</ecNumber>
    </recommendedName>
    <alternativeName>
        <fullName evidence="1">N-acetylmuramic acid 6-phosphate hydrolase</fullName>
    </alternativeName>
    <alternativeName>
        <fullName evidence="1">N-acetylmuramic acid 6-phosphate lyase</fullName>
    </alternativeName>
</protein>
<organism>
    <name type="scientific">Escherichia coli O81 (strain ED1a)</name>
    <dbReference type="NCBI Taxonomy" id="585397"/>
    <lineage>
        <taxon>Bacteria</taxon>
        <taxon>Pseudomonadati</taxon>
        <taxon>Pseudomonadota</taxon>
        <taxon>Gammaproteobacteria</taxon>
        <taxon>Enterobacterales</taxon>
        <taxon>Enterobacteriaceae</taxon>
        <taxon>Escherichia</taxon>
    </lineage>
</organism>
<feature type="chain" id="PRO_1000118012" description="N-acetylmuramic acid 6-phosphate etherase">
    <location>
        <begin position="1"/>
        <end position="298"/>
    </location>
</feature>
<feature type="domain" description="SIS" evidence="1">
    <location>
        <begin position="55"/>
        <end position="218"/>
    </location>
</feature>
<feature type="active site" description="Proton donor" evidence="1">
    <location>
        <position position="83"/>
    </location>
</feature>
<feature type="active site" evidence="1">
    <location>
        <position position="114"/>
    </location>
</feature>
<name>MURQ_ECO81</name>